<accession>B9J7T9</accession>
<reference key="1">
    <citation type="journal article" date="2009" name="J. Bacteriol.">
        <title>Genome sequences of three Agrobacterium biovars help elucidate the evolution of multichromosome genomes in bacteria.</title>
        <authorList>
            <person name="Slater S.C."/>
            <person name="Goldman B.S."/>
            <person name="Goodner B."/>
            <person name="Setubal J.C."/>
            <person name="Farrand S.K."/>
            <person name="Nester E.W."/>
            <person name="Burr T.J."/>
            <person name="Banta L."/>
            <person name="Dickerman A.W."/>
            <person name="Paulsen I."/>
            <person name="Otten L."/>
            <person name="Suen G."/>
            <person name="Welch R."/>
            <person name="Almeida N.F."/>
            <person name="Arnold F."/>
            <person name="Burton O.T."/>
            <person name="Du Z."/>
            <person name="Ewing A."/>
            <person name="Godsy E."/>
            <person name="Heisel S."/>
            <person name="Houmiel K.L."/>
            <person name="Jhaveri J."/>
            <person name="Lu J."/>
            <person name="Miller N.M."/>
            <person name="Norton S."/>
            <person name="Chen Q."/>
            <person name="Phoolcharoen W."/>
            <person name="Ohlin V."/>
            <person name="Ondrusek D."/>
            <person name="Pride N."/>
            <person name="Stricklin S.L."/>
            <person name="Sun J."/>
            <person name="Wheeler C."/>
            <person name="Wilson L."/>
            <person name="Zhu H."/>
            <person name="Wood D.W."/>
        </authorList>
    </citation>
    <scope>NUCLEOTIDE SEQUENCE [LARGE SCALE GENOMIC DNA]</scope>
    <source>
        <strain>K84 / ATCC BAA-868</strain>
    </source>
</reference>
<comment type="function">
    <text evidence="1">Phosphorolytic 3'-5' exoribonuclease that plays an important role in tRNA 3'-end maturation. Removes nucleotide residues following the 3'-CCA terminus of tRNAs; can also add nucleotides to the ends of RNA molecules by using nucleoside diphosphates as substrates, but this may not be physiologically important. Probably plays a role in initiation of 16S rRNA degradation (leading to ribosome degradation) during starvation.</text>
</comment>
<comment type="catalytic activity">
    <reaction evidence="1">
        <text>tRNA(n+1) + phosphate = tRNA(n) + a ribonucleoside 5'-diphosphate</text>
        <dbReference type="Rhea" id="RHEA:10628"/>
        <dbReference type="Rhea" id="RHEA-COMP:17343"/>
        <dbReference type="Rhea" id="RHEA-COMP:17344"/>
        <dbReference type="ChEBI" id="CHEBI:43474"/>
        <dbReference type="ChEBI" id="CHEBI:57930"/>
        <dbReference type="ChEBI" id="CHEBI:173114"/>
        <dbReference type="EC" id="2.7.7.56"/>
    </reaction>
</comment>
<comment type="subunit">
    <text evidence="1">Homohexameric ring arranged as a trimer of dimers.</text>
</comment>
<comment type="similarity">
    <text evidence="1">Belongs to the RNase PH family.</text>
</comment>
<protein>
    <recommendedName>
        <fullName evidence="1">Ribonuclease PH</fullName>
        <shortName evidence="1">RNase PH</shortName>
        <ecNumber evidence="1">2.7.7.56</ecNumber>
    </recommendedName>
    <alternativeName>
        <fullName evidence="1">tRNA nucleotidyltransferase</fullName>
    </alternativeName>
</protein>
<name>RNPH_RHIR8</name>
<evidence type="ECO:0000255" key="1">
    <source>
        <dbReference type="HAMAP-Rule" id="MF_00564"/>
    </source>
</evidence>
<proteinExistence type="inferred from homology"/>
<keyword id="KW-0548">Nucleotidyltransferase</keyword>
<keyword id="KW-0694">RNA-binding</keyword>
<keyword id="KW-0698">rRNA processing</keyword>
<keyword id="KW-0808">Transferase</keyword>
<keyword id="KW-0819">tRNA processing</keyword>
<keyword id="KW-0820">tRNA-binding</keyword>
<dbReference type="EC" id="2.7.7.56" evidence="1"/>
<dbReference type="EMBL" id="CP000628">
    <property type="protein sequence ID" value="ACM25261.1"/>
    <property type="molecule type" value="Genomic_DNA"/>
</dbReference>
<dbReference type="RefSeq" id="WP_007695314.1">
    <property type="nucleotide sequence ID" value="NC_011985.1"/>
</dbReference>
<dbReference type="SMR" id="B9J7T9"/>
<dbReference type="STRING" id="311403.Arad_0611"/>
<dbReference type="GeneID" id="86847075"/>
<dbReference type="KEGG" id="ara:Arad_0611"/>
<dbReference type="eggNOG" id="COG0689">
    <property type="taxonomic scope" value="Bacteria"/>
</dbReference>
<dbReference type="HOGENOM" id="CLU_050858_0_0_5"/>
<dbReference type="Proteomes" id="UP000001600">
    <property type="component" value="Chromosome 1"/>
</dbReference>
<dbReference type="GO" id="GO:0000175">
    <property type="term" value="F:3'-5'-RNA exonuclease activity"/>
    <property type="evidence" value="ECO:0007669"/>
    <property type="project" value="UniProtKB-UniRule"/>
</dbReference>
<dbReference type="GO" id="GO:0000049">
    <property type="term" value="F:tRNA binding"/>
    <property type="evidence" value="ECO:0007669"/>
    <property type="project" value="UniProtKB-UniRule"/>
</dbReference>
<dbReference type="GO" id="GO:0009022">
    <property type="term" value="F:tRNA nucleotidyltransferase activity"/>
    <property type="evidence" value="ECO:0007669"/>
    <property type="project" value="UniProtKB-UniRule"/>
</dbReference>
<dbReference type="GO" id="GO:0016075">
    <property type="term" value="P:rRNA catabolic process"/>
    <property type="evidence" value="ECO:0007669"/>
    <property type="project" value="UniProtKB-UniRule"/>
</dbReference>
<dbReference type="GO" id="GO:0006364">
    <property type="term" value="P:rRNA processing"/>
    <property type="evidence" value="ECO:0007669"/>
    <property type="project" value="UniProtKB-KW"/>
</dbReference>
<dbReference type="GO" id="GO:0008033">
    <property type="term" value="P:tRNA processing"/>
    <property type="evidence" value="ECO:0007669"/>
    <property type="project" value="UniProtKB-UniRule"/>
</dbReference>
<dbReference type="CDD" id="cd11362">
    <property type="entry name" value="RNase_PH_bact"/>
    <property type="match status" value="1"/>
</dbReference>
<dbReference type="FunFam" id="3.30.230.70:FF:000003">
    <property type="entry name" value="Ribonuclease PH"/>
    <property type="match status" value="1"/>
</dbReference>
<dbReference type="Gene3D" id="3.30.230.70">
    <property type="entry name" value="GHMP Kinase, N-terminal domain"/>
    <property type="match status" value="1"/>
</dbReference>
<dbReference type="HAMAP" id="MF_00564">
    <property type="entry name" value="RNase_PH"/>
    <property type="match status" value="1"/>
</dbReference>
<dbReference type="InterPro" id="IPR001247">
    <property type="entry name" value="ExoRNase_PH_dom1"/>
</dbReference>
<dbReference type="InterPro" id="IPR015847">
    <property type="entry name" value="ExoRNase_PH_dom2"/>
</dbReference>
<dbReference type="InterPro" id="IPR036345">
    <property type="entry name" value="ExoRNase_PH_dom2_sf"/>
</dbReference>
<dbReference type="InterPro" id="IPR027408">
    <property type="entry name" value="PNPase/RNase_PH_dom_sf"/>
</dbReference>
<dbReference type="InterPro" id="IPR020568">
    <property type="entry name" value="Ribosomal_Su5_D2-typ_SF"/>
</dbReference>
<dbReference type="InterPro" id="IPR050080">
    <property type="entry name" value="RNase_PH"/>
</dbReference>
<dbReference type="InterPro" id="IPR002381">
    <property type="entry name" value="RNase_PH_bac-type"/>
</dbReference>
<dbReference type="InterPro" id="IPR018336">
    <property type="entry name" value="RNase_PH_CS"/>
</dbReference>
<dbReference type="NCBIfam" id="TIGR01966">
    <property type="entry name" value="RNasePH"/>
    <property type="match status" value="1"/>
</dbReference>
<dbReference type="PANTHER" id="PTHR11953">
    <property type="entry name" value="EXOSOME COMPLEX COMPONENT"/>
    <property type="match status" value="1"/>
</dbReference>
<dbReference type="PANTHER" id="PTHR11953:SF0">
    <property type="entry name" value="EXOSOME COMPLEX COMPONENT RRP41"/>
    <property type="match status" value="1"/>
</dbReference>
<dbReference type="Pfam" id="PF01138">
    <property type="entry name" value="RNase_PH"/>
    <property type="match status" value="1"/>
</dbReference>
<dbReference type="Pfam" id="PF03725">
    <property type="entry name" value="RNase_PH_C"/>
    <property type="match status" value="1"/>
</dbReference>
<dbReference type="SUPFAM" id="SSF55666">
    <property type="entry name" value="Ribonuclease PH domain 2-like"/>
    <property type="match status" value="1"/>
</dbReference>
<dbReference type="SUPFAM" id="SSF54211">
    <property type="entry name" value="Ribosomal protein S5 domain 2-like"/>
    <property type="match status" value="1"/>
</dbReference>
<dbReference type="PROSITE" id="PS01277">
    <property type="entry name" value="RIBONUCLEASE_PH"/>
    <property type="match status" value="1"/>
</dbReference>
<organism>
    <name type="scientific">Rhizobium rhizogenes (strain K84 / ATCC BAA-868)</name>
    <name type="common">Agrobacterium radiobacter</name>
    <dbReference type="NCBI Taxonomy" id="311403"/>
    <lineage>
        <taxon>Bacteria</taxon>
        <taxon>Pseudomonadati</taxon>
        <taxon>Pseudomonadota</taxon>
        <taxon>Alphaproteobacteria</taxon>
        <taxon>Hyphomicrobiales</taxon>
        <taxon>Rhizobiaceae</taxon>
        <taxon>Rhizobium/Agrobacterium group</taxon>
        <taxon>Rhizobium</taxon>
    </lineage>
</organism>
<gene>
    <name evidence="1" type="primary">rph</name>
    <name type="ordered locus">Arad_0611</name>
</gene>
<feature type="chain" id="PRO_1000194460" description="Ribonuclease PH">
    <location>
        <begin position="1"/>
        <end position="238"/>
    </location>
</feature>
<feature type="binding site" evidence="1">
    <location>
        <position position="86"/>
    </location>
    <ligand>
        <name>phosphate</name>
        <dbReference type="ChEBI" id="CHEBI:43474"/>
        <note>substrate</note>
    </ligand>
</feature>
<feature type="binding site" evidence="1">
    <location>
        <begin position="124"/>
        <end position="126"/>
    </location>
    <ligand>
        <name>phosphate</name>
        <dbReference type="ChEBI" id="CHEBI:43474"/>
        <note>substrate</note>
    </ligand>
</feature>
<sequence length="238" mass="26254">MRPSGRKTDQMRKVSFERNFSKHAEGSCLVKFGDTHVLCTASLEEKTPPWLRNSGKGWVTAEYGMLPRATGERMKREAASGKQGGRTQEIQRLIGRSLRAVVDLKELGERQITIDCDVIQADGGTRTASITGAWIALYDCLKWMESRNMIKVERVLKDHIAAISCGIFASQPVIDLDYLEDSSAETDANFVMTGKGGIVEIQGTAEGTPFSEEEFTTLMHLAKNGIAELVELQKQAIA</sequence>